<comment type="catalytic activity">
    <reaction evidence="1">
        <text>L-histidine = trans-urocanate + NH4(+)</text>
        <dbReference type="Rhea" id="RHEA:21232"/>
        <dbReference type="ChEBI" id="CHEBI:17771"/>
        <dbReference type="ChEBI" id="CHEBI:28938"/>
        <dbReference type="ChEBI" id="CHEBI:57595"/>
        <dbReference type="EC" id="4.3.1.3"/>
    </reaction>
</comment>
<comment type="pathway">
    <text evidence="1">Amino-acid degradation; L-histidine degradation into L-glutamate; N-formimidoyl-L-glutamate from L-histidine: step 1/3.</text>
</comment>
<comment type="subcellular location">
    <subcellularLocation>
        <location evidence="1">Cytoplasm</location>
    </subcellularLocation>
</comment>
<comment type="PTM">
    <text evidence="1">Contains an active site 4-methylidene-imidazol-5-one (MIO), which is formed autocatalytically by cyclization and dehydration of residues Ala-Ser-Gly.</text>
</comment>
<comment type="similarity">
    <text evidence="1">Belongs to the PAL/histidase family.</text>
</comment>
<keyword id="KW-0963">Cytoplasm</keyword>
<keyword id="KW-0369">Histidine metabolism</keyword>
<keyword id="KW-0456">Lyase</keyword>
<keyword id="KW-1185">Reference proteome</keyword>
<reference key="1">
    <citation type="journal article" date="2007" name="J. Bacteriol.">
        <title>Genome-wide transcriptional changes in Streptococcus gordonii in response to competence signaling peptide.</title>
        <authorList>
            <person name="Vickerman M.M."/>
            <person name="Iobst S."/>
            <person name="Jesionowski A.M."/>
            <person name="Gill S.R."/>
        </authorList>
    </citation>
    <scope>NUCLEOTIDE SEQUENCE [LARGE SCALE GENOMIC DNA]</scope>
    <source>
        <strain>Challis / ATCC 35105 / BCRC 15272 / CH1 / DL1 / V288</strain>
    </source>
</reference>
<accession>A8AZ70</accession>
<feature type="chain" id="PRO_1000078235" description="Histidine ammonia-lyase">
    <location>
        <begin position="1"/>
        <end position="513"/>
    </location>
</feature>
<feature type="modified residue" description="2,3-didehydroalanine (Ser)" evidence="1">
    <location>
        <position position="145"/>
    </location>
</feature>
<feature type="cross-link" description="5-imidazolinone (Ala-Gly)" evidence="1">
    <location>
        <begin position="144"/>
        <end position="146"/>
    </location>
</feature>
<name>HUTH_STRGC</name>
<proteinExistence type="inferred from homology"/>
<evidence type="ECO:0000255" key="1">
    <source>
        <dbReference type="HAMAP-Rule" id="MF_00229"/>
    </source>
</evidence>
<organism>
    <name type="scientific">Streptococcus gordonii (strain Challis / ATCC 35105 / BCRC 15272 / CH1 / DL1 / V288)</name>
    <dbReference type="NCBI Taxonomy" id="467705"/>
    <lineage>
        <taxon>Bacteria</taxon>
        <taxon>Bacillati</taxon>
        <taxon>Bacillota</taxon>
        <taxon>Bacilli</taxon>
        <taxon>Lactobacillales</taxon>
        <taxon>Streptococcaceae</taxon>
        <taxon>Streptococcus</taxon>
    </lineage>
</organism>
<protein>
    <recommendedName>
        <fullName evidence="1">Histidine ammonia-lyase</fullName>
        <shortName evidence="1">Histidase</shortName>
        <ecNumber evidence="1">4.3.1.3</ecNumber>
    </recommendedName>
</protein>
<sequence length="513" mass="55505">MTHVINLDGEHLTLEDVIAVARHGATCEIDQEAKKAVEASRKIVDDIVREKRVVYGVTTGFGSLCNVSISPEDTTQLQENLIRTHASGFGDPLPEDAVRAIMLIRINSLVKGYSGIRLSTVEKLLELLNKGVVPFIPEKGSLGASGDLAPLAHMVLPMLGLGHAYYQGQLLSGQEALDKAGIEKIALAAKEGLALINGTTVLTGIGALATYDAIQLLKLSDVAGALSMEVHNGITSPFEEDLHTIRPQSGQLATARNIRNLLEGSGNTTVATQQRVQDPYTLRCIPQIHGASKDSIAYVKTKVEIEINSVTDNPIITKEGHVISGGNFHGEPMAQPFDFLGIAISEIGNVSERRVERLVNSQLSKLPSFLVKHPGLNSGFMITQYACASLASENKVLAHPASVDSIPSCENQEDFVSMGTTAARKAAEILKNSRRIVATEIMAACQALDLKPENHELGKGTKPAYDLFRQHVRFIEFDKDIEIYEELNKASELIESDEFLAAVENAVDLSIQF</sequence>
<dbReference type="EC" id="4.3.1.3" evidence="1"/>
<dbReference type="EMBL" id="CP000725">
    <property type="protein sequence ID" value="ABV10192.1"/>
    <property type="molecule type" value="Genomic_DNA"/>
</dbReference>
<dbReference type="RefSeq" id="WP_012130845.1">
    <property type="nucleotide sequence ID" value="NC_009785.1"/>
</dbReference>
<dbReference type="SMR" id="A8AZ70"/>
<dbReference type="STRING" id="467705.SGO_1811"/>
<dbReference type="KEGG" id="sgo:SGO_1811"/>
<dbReference type="eggNOG" id="COG2986">
    <property type="taxonomic scope" value="Bacteria"/>
</dbReference>
<dbReference type="HOGENOM" id="CLU_014801_4_0_9"/>
<dbReference type="UniPathway" id="UPA00379">
    <property type="reaction ID" value="UER00549"/>
</dbReference>
<dbReference type="Proteomes" id="UP000001131">
    <property type="component" value="Chromosome"/>
</dbReference>
<dbReference type="GO" id="GO:0005737">
    <property type="term" value="C:cytoplasm"/>
    <property type="evidence" value="ECO:0007669"/>
    <property type="project" value="UniProtKB-SubCell"/>
</dbReference>
<dbReference type="GO" id="GO:0004397">
    <property type="term" value="F:histidine ammonia-lyase activity"/>
    <property type="evidence" value="ECO:0007669"/>
    <property type="project" value="UniProtKB-UniRule"/>
</dbReference>
<dbReference type="GO" id="GO:0019556">
    <property type="term" value="P:L-histidine catabolic process to glutamate and formamide"/>
    <property type="evidence" value="ECO:0007669"/>
    <property type="project" value="UniProtKB-UniPathway"/>
</dbReference>
<dbReference type="GO" id="GO:0019557">
    <property type="term" value="P:L-histidine catabolic process to glutamate and formate"/>
    <property type="evidence" value="ECO:0007669"/>
    <property type="project" value="UniProtKB-UniPathway"/>
</dbReference>
<dbReference type="CDD" id="cd00332">
    <property type="entry name" value="PAL-HAL"/>
    <property type="match status" value="1"/>
</dbReference>
<dbReference type="FunFam" id="1.10.275.10:FF:000005">
    <property type="entry name" value="Histidine ammonia-lyase"/>
    <property type="match status" value="1"/>
</dbReference>
<dbReference type="FunFam" id="1.20.200.10:FF:000003">
    <property type="entry name" value="Histidine ammonia-lyase"/>
    <property type="match status" value="1"/>
</dbReference>
<dbReference type="Gene3D" id="1.20.200.10">
    <property type="entry name" value="Fumarase/aspartase (Central domain)"/>
    <property type="match status" value="1"/>
</dbReference>
<dbReference type="Gene3D" id="1.10.275.10">
    <property type="entry name" value="Fumarase/aspartase (N-terminal domain)"/>
    <property type="match status" value="1"/>
</dbReference>
<dbReference type="HAMAP" id="MF_00229">
    <property type="entry name" value="His_ammonia_lyase"/>
    <property type="match status" value="1"/>
</dbReference>
<dbReference type="InterPro" id="IPR001106">
    <property type="entry name" value="Aromatic_Lyase"/>
</dbReference>
<dbReference type="InterPro" id="IPR024083">
    <property type="entry name" value="Fumarase/histidase_N"/>
</dbReference>
<dbReference type="InterPro" id="IPR005921">
    <property type="entry name" value="HutH"/>
</dbReference>
<dbReference type="InterPro" id="IPR008948">
    <property type="entry name" value="L-Aspartase-like"/>
</dbReference>
<dbReference type="InterPro" id="IPR022313">
    <property type="entry name" value="Phe/His_NH3-lyase_AS"/>
</dbReference>
<dbReference type="NCBIfam" id="TIGR01225">
    <property type="entry name" value="hutH"/>
    <property type="match status" value="1"/>
</dbReference>
<dbReference type="NCBIfam" id="NF006871">
    <property type="entry name" value="PRK09367.1"/>
    <property type="match status" value="1"/>
</dbReference>
<dbReference type="PANTHER" id="PTHR10362">
    <property type="entry name" value="HISTIDINE AMMONIA-LYASE"/>
    <property type="match status" value="1"/>
</dbReference>
<dbReference type="Pfam" id="PF00221">
    <property type="entry name" value="Lyase_aromatic"/>
    <property type="match status" value="1"/>
</dbReference>
<dbReference type="SUPFAM" id="SSF48557">
    <property type="entry name" value="L-aspartase-like"/>
    <property type="match status" value="1"/>
</dbReference>
<dbReference type="PROSITE" id="PS00488">
    <property type="entry name" value="PAL_HISTIDASE"/>
    <property type="match status" value="1"/>
</dbReference>
<gene>
    <name evidence="1" type="primary">hutH</name>
    <name type="ordered locus">SGO_1811</name>
</gene>